<dbReference type="EC" id="2.4.1.227" evidence="1"/>
<dbReference type="EMBL" id="AE003852">
    <property type="protein sequence ID" value="AAF95544.1"/>
    <property type="molecule type" value="Genomic_DNA"/>
</dbReference>
<dbReference type="PIR" id="E82081">
    <property type="entry name" value="E82081"/>
</dbReference>
<dbReference type="RefSeq" id="NP_232031.1">
    <property type="nucleotide sequence ID" value="NC_002505.1"/>
</dbReference>
<dbReference type="SMR" id="Q9KPG7"/>
<dbReference type="STRING" id="243277.VC_2401"/>
<dbReference type="CAZy" id="GT28">
    <property type="family name" value="Glycosyltransferase Family 28"/>
</dbReference>
<dbReference type="DNASU" id="2613070"/>
<dbReference type="EnsemblBacteria" id="AAF95544">
    <property type="protein sequence ID" value="AAF95544"/>
    <property type="gene ID" value="VC_2401"/>
</dbReference>
<dbReference type="KEGG" id="vch:VC_2401"/>
<dbReference type="PATRIC" id="fig|243277.26.peg.2286"/>
<dbReference type="eggNOG" id="COG0707">
    <property type="taxonomic scope" value="Bacteria"/>
</dbReference>
<dbReference type="HOGENOM" id="CLU_037404_2_0_6"/>
<dbReference type="UniPathway" id="UPA00219"/>
<dbReference type="Proteomes" id="UP000000584">
    <property type="component" value="Chromosome 1"/>
</dbReference>
<dbReference type="GO" id="GO:0005886">
    <property type="term" value="C:plasma membrane"/>
    <property type="evidence" value="ECO:0007669"/>
    <property type="project" value="UniProtKB-SubCell"/>
</dbReference>
<dbReference type="GO" id="GO:0051991">
    <property type="term" value="F:UDP-N-acetyl-D-glucosamine:N-acetylmuramoyl-L-alanyl-D-glutamyl-meso-2,6-diaminopimelyl-D-alanyl-D-alanine-diphosphoundecaprenol 4-beta-N-acetylglucosaminlytransferase activity"/>
    <property type="evidence" value="ECO:0007669"/>
    <property type="project" value="RHEA"/>
</dbReference>
<dbReference type="GO" id="GO:0050511">
    <property type="term" value="F:undecaprenyldiphospho-muramoylpentapeptide beta-N-acetylglucosaminyltransferase activity"/>
    <property type="evidence" value="ECO:0000318"/>
    <property type="project" value="GO_Central"/>
</dbReference>
<dbReference type="GO" id="GO:0005975">
    <property type="term" value="P:carbohydrate metabolic process"/>
    <property type="evidence" value="ECO:0007669"/>
    <property type="project" value="InterPro"/>
</dbReference>
<dbReference type="GO" id="GO:0051301">
    <property type="term" value="P:cell division"/>
    <property type="evidence" value="ECO:0007669"/>
    <property type="project" value="UniProtKB-KW"/>
</dbReference>
<dbReference type="GO" id="GO:0071555">
    <property type="term" value="P:cell wall organization"/>
    <property type="evidence" value="ECO:0007669"/>
    <property type="project" value="UniProtKB-KW"/>
</dbReference>
<dbReference type="GO" id="GO:0030259">
    <property type="term" value="P:lipid glycosylation"/>
    <property type="evidence" value="ECO:0007669"/>
    <property type="project" value="UniProtKB-UniRule"/>
</dbReference>
<dbReference type="GO" id="GO:0009252">
    <property type="term" value="P:peptidoglycan biosynthetic process"/>
    <property type="evidence" value="ECO:0007669"/>
    <property type="project" value="UniProtKB-UniRule"/>
</dbReference>
<dbReference type="GO" id="GO:0008360">
    <property type="term" value="P:regulation of cell shape"/>
    <property type="evidence" value="ECO:0007669"/>
    <property type="project" value="UniProtKB-KW"/>
</dbReference>
<dbReference type="CDD" id="cd03785">
    <property type="entry name" value="GT28_MurG"/>
    <property type="match status" value="1"/>
</dbReference>
<dbReference type="Gene3D" id="3.40.50.2000">
    <property type="entry name" value="Glycogen Phosphorylase B"/>
    <property type="match status" value="2"/>
</dbReference>
<dbReference type="HAMAP" id="MF_00033">
    <property type="entry name" value="MurG"/>
    <property type="match status" value="1"/>
</dbReference>
<dbReference type="InterPro" id="IPR006009">
    <property type="entry name" value="GlcNAc_MurG"/>
</dbReference>
<dbReference type="InterPro" id="IPR007235">
    <property type="entry name" value="Glyco_trans_28_C"/>
</dbReference>
<dbReference type="InterPro" id="IPR004276">
    <property type="entry name" value="GlycoTrans_28_N"/>
</dbReference>
<dbReference type="NCBIfam" id="TIGR01133">
    <property type="entry name" value="murG"/>
    <property type="match status" value="1"/>
</dbReference>
<dbReference type="PANTHER" id="PTHR21015:SF22">
    <property type="entry name" value="GLYCOSYLTRANSFERASE"/>
    <property type="match status" value="1"/>
</dbReference>
<dbReference type="PANTHER" id="PTHR21015">
    <property type="entry name" value="UDP-N-ACETYLGLUCOSAMINE--N-ACETYLMURAMYL-(PENTAPEPTIDE) PYROPHOSPHORYL-UNDECAPRENOL N-ACETYLGLUCOSAMINE TRANSFERASE 1"/>
    <property type="match status" value="1"/>
</dbReference>
<dbReference type="Pfam" id="PF04101">
    <property type="entry name" value="Glyco_tran_28_C"/>
    <property type="match status" value="1"/>
</dbReference>
<dbReference type="Pfam" id="PF03033">
    <property type="entry name" value="Glyco_transf_28"/>
    <property type="match status" value="1"/>
</dbReference>
<dbReference type="SUPFAM" id="SSF53756">
    <property type="entry name" value="UDP-Glycosyltransferase/glycogen phosphorylase"/>
    <property type="match status" value="1"/>
</dbReference>
<sequence length="354" mass="37983">MMNKNKKLMVMAGGTGGHVFPGLAVAKQLQQQGWQIRWLGTADRMEAELVPKHGIEIDFIQVKGLRGQGLMRLLKAPFQIVNAILQARRHLLTYQPDAVLGMGGYVSGPGGIAAWLLGIPVVLHEQNAVAGLTNQWLAKIARRVFQAFPGAFADASVVGNPVRQDVVQLAAPEQRFATRNGAIRILVMGGSQGARILNQTLPAVMAALGEGYEIRHQAGKNSQQDVAEAYAAAGVESAQVTEFIDDVADAYAWADLLICRSGALTVSEVSAAGVGAIFIPFMHKDRQQALNADHLVACGAAKMIEQPELSVEKLTQMVRELDRAQLLSMAQKARQAAKLDADKVVAQAIIAITE</sequence>
<accession>Q9KPG7</accession>
<proteinExistence type="inferred from homology"/>
<organism>
    <name type="scientific">Vibrio cholerae serotype O1 (strain ATCC 39315 / El Tor Inaba N16961)</name>
    <dbReference type="NCBI Taxonomy" id="243277"/>
    <lineage>
        <taxon>Bacteria</taxon>
        <taxon>Pseudomonadati</taxon>
        <taxon>Pseudomonadota</taxon>
        <taxon>Gammaproteobacteria</taxon>
        <taxon>Vibrionales</taxon>
        <taxon>Vibrionaceae</taxon>
        <taxon>Vibrio</taxon>
    </lineage>
</organism>
<feature type="chain" id="PRO_0000109234" description="UDP-N-acetylglucosamine--N-acetylmuramyl-(pentapeptide) pyrophosphoryl-undecaprenol N-acetylglucosamine transferase">
    <location>
        <begin position="1"/>
        <end position="354"/>
    </location>
</feature>
<feature type="binding site" evidence="1">
    <location>
        <begin position="15"/>
        <end position="17"/>
    </location>
    <ligand>
        <name>UDP-N-acetyl-alpha-D-glucosamine</name>
        <dbReference type="ChEBI" id="CHEBI:57705"/>
    </ligand>
</feature>
<feature type="binding site" evidence="1">
    <location>
        <position position="127"/>
    </location>
    <ligand>
        <name>UDP-N-acetyl-alpha-D-glucosamine</name>
        <dbReference type="ChEBI" id="CHEBI:57705"/>
    </ligand>
</feature>
<feature type="binding site" evidence="1">
    <location>
        <position position="163"/>
    </location>
    <ligand>
        <name>UDP-N-acetyl-alpha-D-glucosamine</name>
        <dbReference type="ChEBI" id="CHEBI:57705"/>
    </ligand>
</feature>
<feature type="binding site" evidence="1">
    <location>
        <position position="191"/>
    </location>
    <ligand>
        <name>UDP-N-acetyl-alpha-D-glucosamine</name>
        <dbReference type="ChEBI" id="CHEBI:57705"/>
    </ligand>
</feature>
<feature type="binding site" evidence="1">
    <location>
        <position position="244"/>
    </location>
    <ligand>
        <name>UDP-N-acetyl-alpha-D-glucosamine</name>
        <dbReference type="ChEBI" id="CHEBI:57705"/>
    </ligand>
</feature>
<feature type="binding site" evidence="1">
    <location>
        <begin position="263"/>
        <end position="268"/>
    </location>
    <ligand>
        <name>UDP-N-acetyl-alpha-D-glucosamine</name>
        <dbReference type="ChEBI" id="CHEBI:57705"/>
    </ligand>
</feature>
<feature type="binding site" evidence="1">
    <location>
        <position position="288"/>
    </location>
    <ligand>
        <name>UDP-N-acetyl-alpha-D-glucosamine</name>
        <dbReference type="ChEBI" id="CHEBI:57705"/>
    </ligand>
</feature>
<gene>
    <name evidence="1" type="primary">murG</name>
    <name type="ordered locus">VC_2401</name>
</gene>
<keyword id="KW-0131">Cell cycle</keyword>
<keyword id="KW-0132">Cell division</keyword>
<keyword id="KW-0997">Cell inner membrane</keyword>
<keyword id="KW-1003">Cell membrane</keyword>
<keyword id="KW-0133">Cell shape</keyword>
<keyword id="KW-0961">Cell wall biogenesis/degradation</keyword>
<keyword id="KW-0328">Glycosyltransferase</keyword>
<keyword id="KW-0472">Membrane</keyword>
<keyword id="KW-0573">Peptidoglycan synthesis</keyword>
<keyword id="KW-1185">Reference proteome</keyword>
<keyword id="KW-0808">Transferase</keyword>
<protein>
    <recommendedName>
        <fullName evidence="1">UDP-N-acetylglucosamine--N-acetylmuramyl-(pentapeptide) pyrophosphoryl-undecaprenol N-acetylglucosamine transferase</fullName>
        <ecNumber evidence="1">2.4.1.227</ecNumber>
    </recommendedName>
    <alternativeName>
        <fullName evidence="1">Undecaprenyl-PP-MurNAc-pentapeptide-UDPGlcNAc GlcNAc transferase</fullName>
    </alternativeName>
</protein>
<evidence type="ECO:0000255" key="1">
    <source>
        <dbReference type="HAMAP-Rule" id="MF_00033"/>
    </source>
</evidence>
<comment type="function">
    <text evidence="1">Cell wall formation. Catalyzes the transfer of a GlcNAc subunit on undecaprenyl-pyrophosphoryl-MurNAc-pentapeptide (lipid intermediate I) to form undecaprenyl-pyrophosphoryl-MurNAc-(pentapeptide)GlcNAc (lipid intermediate II).</text>
</comment>
<comment type="catalytic activity">
    <reaction evidence="1">
        <text>di-trans,octa-cis-undecaprenyl diphospho-N-acetyl-alpha-D-muramoyl-L-alanyl-D-glutamyl-meso-2,6-diaminopimeloyl-D-alanyl-D-alanine + UDP-N-acetyl-alpha-D-glucosamine = di-trans,octa-cis-undecaprenyl diphospho-[N-acetyl-alpha-D-glucosaminyl-(1-&gt;4)]-N-acetyl-alpha-D-muramoyl-L-alanyl-D-glutamyl-meso-2,6-diaminopimeloyl-D-alanyl-D-alanine + UDP + H(+)</text>
        <dbReference type="Rhea" id="RHEA:31227"/>
        <dbReference type="ChEBI" id="CHEBI:15378"/>
        <dbReference type="ChEBI" id="CHEBI:57705"/>
        <dbReference type="ChEBI" id="CHEBI:58223"/>
        <dbReference type="ChEBI" id="CHEBI:61387"/>
        <dbReference type="ChEBI" id="CHEBI:61388"/>
        <dbReference type="EC" id="2.4.1.227"/>
    </reaction>
</comment>
<comment type="pathway">
    <text evidence="1">Cell wall biogenesis; peptidoglycan biosynthesis.</text>
</comment>
<comment type="subcellular location">
    <subcellularLocation>
        <location evidence="1">Cell inner membrane</location>
        <topology evidence="1">Peripheral membrane protein</topology>
        <orientation evidence="1">Cytoplasmic side</orientation>
    </subcellularLocation>
</comment>
<comment type="similarity">
    <text evidence="1">Belongs to the glycosyltransferase 28 family. MurG subfamily.</text>
</comment>
<reference key="1">
    <citation type="journal article" date="2000" name="Nature">
        <title>DNA sequence of both chromosomes of the cholera pathogen Vibrio cholerae.</title>
        <authorList>
            <person name="Heidelberg J.F."/>
            <person name="Eisen J.A."/>
            <person name="Nelson W.C."/>
            <person name="Clayton R.A."/>
            <person name="Gwinn M.L."/>
            <person name="Dodson R.J."/>
            <person name="Haft D.H."/>
            <person name="Hickey E.K."/>
            <person name="Peterson J.D."/>
            <person name="Umayam L.A."/>
            <person name="Gill S.R."/>
            <person name="Nelson K.E."/>
            <person name="Read T.D."/>
            <person name="Tettelin H."/>
            <person name="Richardson D.L."/>
            <person name="Ermolaeva M.D."/>
            <person name="Vamathevan J.J."/>
            <person name="Bass S."/>
            <person name="Qin H."/>
            <person name="Dragoi I."/>
            <person name="Sellers P."/>
            <person name="McDonald L.A."/>
            <person name="Utterback T.R."/>
            <person name="Fleischmann R.D."/>
            <person name="Nierman W.C."/>
            <person name="White O."/>
            <person name="Salzberg S.L."/>
            <person name="Smith H.O."/>
            <person name="Colwell R.R."/>
            <person name="Mekalanos J.J."/>
            <person name="Venter J.C."/>
            <person name="Fraser C.M."/>
        </authorList>
    </citation>
    <scope>NUCLEOTIDE SEQUENCE [LARGE SCALE GENOMIC DNA]</scope>
    <source>
        <strain>ATCC 39315 / El Tor Inaba N16961</strain>
    </source>
</reference>
<name>MURG_VIBCH</name>